<protein>
    <recommendedName>
        <fullName>Monothiol glutaredoxin-S10</fullName>
    </recommendedName>
</protein>
<organism>
    <name type="scientific">Oryza sativa subsp. japonica</name>
    <name type="common">Rice</name>
    <dbReference type="NCBI Taxonomy" id="39947"/>
    <lineage>
        <taxon>Eukaryota</taxon>
        <taxon>Viridiplantae</taxon>
        <taxon>Streptophyta</taxon>
        <taxon>Embryophyta</taxon>
        <taxon>Tracheophyta</taxon>
        <taxon>Spermatophyta</taxon>
        <taxon>Magnoliopsida</taxon>
        <taxon>Liliopsida</taxon>
        <taxon>Poales</taxon>
        <taxon>Poaceae</taxon>
        <taxon>BOP clade</taxon>
        <taxon>Oryzoideae</taxon>
        <taxon>Oryzeae</taxon>
        <taxon>Oryzinae</taxon>
        <taxon>Oryza</taxon>
        <taxon>Oryza sativa</taxon>
    </lineage>
</organism>
<accession>Q0J3L4</accession>
<accession>A3BVV3</accession>
<accession>Q7EZK3</accession>
<accession>Q84Z96</accession>
<keyword id="KW-0001">2Fe-2S</keyword>
<keyword id="KW-0963">Cytoplasm</keyword>
<keyword id="KW-0408">Iron</keyword>
<keyword id="KW-0411">Iron-sulfur</keyword>
<keyword id="KW-0479">Metal-binding</keyword>
<keyword id="KW-0676">Redox-active center</keyword>
<keyword id="KW-1185">Reference proteome</keyword>
<feature type="chain" id="PRO_0000271279" description="Monothiol glutaredoxin-S10">
    <location>
        <begin position="1"/>
        <end position="164"/>
    </location>
</feature>
<feature type="domain" description="Glutaredoxin" evidence="3">
    <location>
        <begin position="60"/>
        <end position="161"/>
    </location>
</feature>
<feature type="binding site" evidence="2">
    <location>
        <position position="80"/>
    </location>
    <ligand>
        <name>[2Fe-2S] cluster</name>
        <dbReference type="ChEBI" id="CHEBI:190135"/>
        <note>ligand shared between dimeric partners</note>
    </ligand>
</feature>
<dbReference type="EMBL" id="AP004623">
    <property type="protein sequence ID" value="BAC56010.1"/>
    <property type="molecule type" value="Genomic_DNA"/>
</dbReference>
<dbReference type="EMBL" id="AP004623">
    <property type="protein sequence ID" value="BAD12949.1"/>
    <property type="status" value="ALT_SEQ"/>
    <property type="molecule type" value="Genomic_DNA"/>
</dbReference>
<dbReference type="EMBL" id="AP005411">
    <property type="protein sequence ID" value="BAD10332.1"/>
    <property type="status" value="ALT_SEQ"/>
    <property type="molecule type" value="Genomic_DNA"/>
</dbReference>
<dbReference type="EMBL" id="AP005411">
    <property type="protein sequence ID" value="BAD10333.1"/>
    <property type="molecule type" value="Genomic_DNA"/>
</dbReference>
<dbReference type="EMBL" id="AP008214">
    <property type="protein sequence ID" value="BAF24451.1"/>
    <property type="status" value="ALT_SEQ"/>
    <property type="molecule type" value="Genomic_DNA"/>
</dbReference>
<dbReference type="EMBL" id="AP008214">
    <property type="protein sequence ID" value="BAH94433.1"/>
    <property type="molecule type" value="Genomic_DNA"/>
</dbReference>
<dbReference type="EMBL" id="AP014964">
    <property type="protein sequence ID" value="BAT06754.1"/>
    <property type="molecule type" value="Genomic_DNA"/>
</dbReference>
<dbReference type="EMBL" id="CM000145">
    <property type="protein sequence ID" value="EAZ43692.1"/>
    <property type="molecule type" value="Genomic_DNA"/>
</dbReference>
<dbReference type="EMBL" id="AK062431">
    <property type="protein sequence ID" value="BAG88313.1"/>
    <property type="molecule type" value="mRNA"/>
</dbReference>
<dbReference type="RefSeq" id="XP_015649985.1">
    <property type="nucleotide sequence ID" value="XM_015794499.1"/>
</dbReference>
<dbReference type="SMR" id="Q0J3L4"/>
<dbReference type="FunCoup" id="Q0J3L4">
    <property type="interactions" value="127"/>
</dbReference>
<dbReference type="STRING" id="39947.Q0J3L4"/>
<dbReference type="PaxDb" id="39947-Q0J3L4"/>
<dbReference type="EnsemblPlants" id="Os08t0565800-02">
    <property type="protein sequence ID" value="Os08t0565800-02"/>
    <property type="gene ID" value="Os08g0565800"/>
</dbReference>
<dbReference type="Gramene" id="Os08t0565800-02">
    <property type="protein sequence ID" value="Os08t0565800-02"/>
    <property type="gene ID" value="Os08g0565800"/>
</dbReference>
<dbReference type="KEGG" id="dosa:Os08g0565800"/>
<dbReference type="eggNOG" id="KOG1752">
    <property type="taxonomic scope" value="Eukaryota"/>
</dbReference>
<dbReference type="HOGENOM" id="CLU_026126_5_1_1"/>
<dbReference type="InParanoid" id="Q0J3L4"/>
<dbReference type="OrthoDB" id="418495at2759"/>
<dbReference type="Proteomes" id="UP000000763">
    <property type="component" value="Chromosome 8"/>
</dbReference>
<dbReference type="Proteomes" id="UP000007752">
    <property type="component" value="Chromosome 8"/>
</dbReference>
<dbReference type="Proteomes" id="UP000059680">
    <property type="component" value="Chromosome 8"/>
</dbReference>
<dbReference type="ExpressionAtlas" id="Q0J3L4">
    <property type="expression patterns" value="baseline and differential"/>
</dbReference>
<dbReference type="GO" id="GO:0005737">
    <property type="term" value="C:cytoplasm"/>
    <property type="evidence" value="ECO:0000318"/>
    <property type="project" value="GO_Central"/>
</dbReference>
<dbReference type="GO" id="GO:0051537">
    <property type="term" value="F:2 iron, 2 sulfur cluster binding"/>
    <property type="evidence" value="ECO:0007669"/>
    <property type="project" value="UniProtKB-KW"/>
</dbReference>
<dbReference type="GO" id="GO:0015038">
    <property type="term" value="F:glutathione disulfide oxidoreductase activity"/>
    <property type="evidence" value="ECO:0000318"/>
    <property type="project" value="GO_Central"/>
</dbReference>
<dbReference type="GO" id="GO:0046872">
    <property type="term" value="F:metal ion binding"/>
    <property type="evidence" value="ECO:0007669"/>
    <property type="project" value="UniProtKB-KW"/>
</dbReference>
<dbReference type="GO" id="GO:0034599">
    <property type="term" value="P:cellular response to oxidative stress"/>
    <property type="evidence" value="ECO:0000318"/>
    <property type="project" value="GO_Central"/>
</dbReference>
<dbReference type="CDD" id="cd03419">
    <property type="entry name" value="GRX_GRXh_1_2_like"/>
    <property type="match status" value="1"/>
</dbReference>
<dbReference type="FunFam" id="3.40.30.10:FF:000217">
    <property type="entry name" value="Glutaredoxin-C5 chloroplastic"/>
    <property type="match status" value="1"/>
</dbReference>
<dbReference type="Gene3D" id="3.40.30.10">
    <property type="entry name" value="Glutaredoxin"/>
    <property type="match status" value="1"/>
</dbReference>
<dbReference type="InterPro" id="IPR002109">
    <property type="entry name" value="Glutaredoxin"/>
</dbReference>
<dbReference type="InterPro" id="IPR011899">
    <property type="entry name" value="Glutaredoxin_euk/vir"/>
</dbReference>
<dbReference type="InterPro" id="IPR014025">
    <property type="entry name" value="Glutaredoxin_subgr"/>
</dbReference>
<dbReference type="InterPro" id="IPR036249">
    <property type="entry name" value="Thioredoxin-like_sf"/>
</dbReference>
<dbReference type="NCBIfam" id="TIGR02180">
    <property type="entry name" value="GRX_euk"/>
    <property type="match status" value="1"/>
</dbReference>
<dbReference type="PANTHER" id="PTHR45694">
    <property type="entry name" value="GLUTAREDOXIN 2"/>
    <property type="match status" value="1"/>
</dbReference>
<dbReference type="PANTHER" id="PTHR45694:SF18">
    <property type="entry name" value="GLUTAREDOXIN-1-RELATED"/>
    <property type="match status" value="1"/>
</dbReference>
<dbReference type="Pfam" id="PF00462">
    <property type="entry name" value="Glutaredoxin"/>
    <property type="match status" value="1"/>
</dbReference>
<dbReference type="PRINTS" id="PR00160">
    <property type="entry name" value="GLUTAREDOXIN"/>
</dbReference>
<dbReference type="SUPFAM" id="SSF52833">
    <property type="entry name" value="Thioredoxin-like"/>
    <property type="match status" value="1"/>
</dbReference>
<dbReference type="PROSITE" id="PS51354">
    <property type="entry name" value="GLUTAREDOXIN_2"/>
    <property type="match status" value="1"/>
</dbReference>
<name>GRS10_ORYSJ</name>
<sequence length="164" mass="17833">MPPRSLTLSRLPVAALGLPFSSCSPPPPRLRFPFAARRARSLATRASSSSPDSSFGSRMEDSVKRTLADNPVVIYSKSWCSYSMEVKALFKRIGVQPHVIELDQLGAQGPQLQKVLERLTGQSTVPNVFIGGKHIGGCTDTVKLHRKGELATMLSELDIDVNNS</sequence>
<proteinExistence type="evidence at transcript level"/>
<evidence type="ECO:0000250" key="1"/>
<evidence type="ECO:0000255" key="2"/>
<evidence type="ECO:0000255" key="3">
    <source>
        <dbReference type="PROSITE-ProRule" id="PRU00686"/>
    </source>
</evidence>
<evidence type="ECO:0000305" key="4"/>
<evidence type="ECO:0000312" key="5">
    <source>
        <dbReference type="EMBL" id="EAZ43692.1"/>
    </source>
</evidence>
<gene>
    <name type="primary">GRXS10</name>
    <name type="ordered locus">Os08g0565800</name>
    <name type="ordered locus">LOC_Os08g45140</name>
    <name evidence="5" type="ORF">OsJ_28319</name>
    <name type="ORF">OSJNBa0044E16.18-1</name>
    <name type="ORF">OSJNBa0044E16.18-2</name>
    <name type="ORF">P0705A05.134-1</name>
    <name type="ORF">P0705A05.134-2</name>
</gene>
<comment type="function">
    <text evidence="4">May only reduce GSH-thiol disulfides, but not protein disulfides.</text>
</comment>
<comment type="subcellular location">
    <subcellularLocation>
        <location evidence="1">Cytoplasm</location>
    </subcellularLocation>
</comment>
<comment type="similarity">
    <text evidence="4">Belongs to the glutaredoxin family. CPYC subfamily.</text>
</comment>
<comment type="sequence caution" evidence="4">
    <conflict type="erroneous gene model prediction">
        <sequence resource="EMBL-CDS" id="BAD10332"/>
    </conflict>
</comment>
<comment type="sequence caution" evidence="4">
    <conflict type="erroneous gene model prediction">
        <sequence resource="EMBL-CDS" id="BAD12949"/>
    </conflict>
</comment>
<comment type="sequence caution" evidence="4">
    <conflict type="erroneous gene model prediction">
        <sequence resource="EMBL-CDS" id="BAF24451"/>
    </conflict>
</comment>
<reference key="1">
    <citation type="journal article" date="2005" name="Nature">
        <title>The map-based sequence of the rice genome.</title>
        <authorList>
            <consortium name="International rice genome sequencing project (IRGSP)"/>
        </authorList>
    </citation>
    <scope>NUCLEOTIDE SEQUENCE [LARGE SCALE GENOMIC DNA]</scope>
    <source>
        <strain>cv. Nipponbare</strain>
    </source>
</reference>
<reference key="2">
    <citation type="journal article" date="2008" name="Nucleic Acids Res.">
        <title>The rice annotation project database (RAP-DB): 2008 update.</title>
        <authorList>
            <consortium name="The rice annotation project (RAP)"/>
        </authorList>
    </citation>
    <scope>GENOME REANNOTATION</scope>
    <source>
        <strain>cv. Nipponbare</strain>
    </source>
</reference>
<reference key="3">
    <citation type="journal article" date="2013" name="Rice">
        <title>Improvement of the Oryza sativa Nipponbare reference genome using next generation sequence and optical map data.</title>
        <authorList>
            <person name="Kawahara Y."/>
            <person name="de la Bastide M."/>
            <person name="Hamilton J.P."/>
            <person name="Kanamori H."/>
            <person name="McCombie W.R."/>
            <person name="Ouyang S."/>
            <person name="Schwartz D.C."/>
            <person name="Tanaka T."/>
            <person name="Wu J."/>
            <person name="Zhou S."/>
            <person name="Childs K.L."/>
            <person name="Davidson R.M."/>
            <person name="Lin H."/>
            <person name="Quesada-Ocampo L."/>
            <person name="Vaillancourt B."/>
            <person name="Sakai H."/>
            <person name="Lee S.S."/>
            <person name="Kim J."/>
            <person name="Numa H."/>
            <person name="Itoh T."/>
            <person name="Buell C.R."/>
            <person name="Matsumoto T."/>
        </authorList>
    </citation>
    <scope>GENOME REANNOTATION</scope>
    <source>
        <strain>cv. Nipponbare</strain>
    </source>
</reference>
<reference key="4">
    <citation type="journal article" date="2005" name="PLoS Biol.">
        <title>The genomes of Oryza sativa: a history of duplications.</title>
        <authorList>
            <person name="Yu J."/>
            <person name="Wang J."/>
            <person name="Lin W."/>
            <person name="Li S."/>
            <person name="Li H."/>
            <person name="Zhou J."/>
            <person name="Ni P."/>
            <person name="Dong W."/>
            <person name="Hu S."/>
            <person name="Zeng C."/>
            <person name="Zhang J."/>
            <person name="Zhang Y."/>
            <person name="Li R."/>
            <person name="Xu Z."/>
            <person name="Li S."/>
            <person name="Li X."/>
            <person name="Zheng H."/>
            <person name="Cong L."/>
            <person name="Lin L."/>
            <person name="Yin J."/>
            <person name="Geng J."/>
            <person name="Li G."/>
            <person name="Shi J."/>
            <person name="Liu J."/>
            <person name="Lv H."/>
            <person name="Li J."/>
            <person name="Wang J."/>
            <person name="Deng Y."/>
            <person name="Ran L."/>
            <person name="Shi X."/>
            <person name="Wang X."/>
            <person name="Wu Q."/>
            <person name="Li C."/>
            <person name="Ren X."/>
            <person name="Wang J."/>
            <person name="Wang X."/>
            <person name="Li D."/>
            <person name="Liu D."/>
            <person name="Zhang X."/>
            <person name="Ji Z."/>
            <person name="Zhao W."/>
            <person name="Sun Y."/>
            <person name="Zhang Z."/>
            <person name="Bao J."/>
            <person name="Han Y."/>
            <person name="Dong L."/>
            <person name="Ji J."/>
            <person name="Chen P."/>
            <person name="Wu S."/>
            <person name="Liu J."/>
            <person name="Xiao Y."/>
            <person name="Bu D."/>
            <person name="Tan J."/>
            <person name="Yang L."/>
            <person name="Ye C."/>
            <person name="Zhang J."/>
            <person name="Xu J."/>
            <person name="Zhou Y."/>
            <person name="Yu Y."/>
            <person name="Zhang B."/>
            <person name="Zhuang S."/>
            <person name="Wei H."/>
            <person name="Liu B."/>
            <person name="Lei M."/>
            <person name="Yu H."/>
            <person name="Li Y."/>
            <person name="Xu H."/>
            <person name="Wei S."/>
            <person name="He X."/>
            <person name="Fang L."/>
            <person name="Zhang Z."/>
            <person name="Zhang Y."/>
            <person name="Huang X."/>
            <person name="Su Z."/>
            <person name="Tong W."/>
            <person name="Li J."/>
            <person name="Tong Z."/>
            <person name="Li S."/>
            <person name="Ye J."/>
            <person name="Wang L."/>
            <person name="Fang L."/>
            <person name="Lei T."/>
            <person name="Chen C.-S."/>
            <person name="Chen H.-C."/>
            <person name="Xu Z."/>
            <person name="Li H."/>
            <person name="Huang H."/>
            <person name="Zhang F."/>
            <person name="Xu H."/>
            <person name="Li N."/>
            <person name="Zhao C."/>
            <person name="Li S."/>
            <person name="Dong L."/>
            <person name="Huang Y."/>
            <person name="Li L."/>
            <person name="Xi Y."/>
            <person name="Qi Q."/>
            <person name="Li W."/>
            <person name="Zhang B."/>
            <person name="Hu W."/>
            <person name="Zhang Y."/>
            <person name="Tian X."/>
            <person name="Jiao Y."/>
            <person name="Liang X."/>
            <person name="Jin J."/>
            <person name="Gao L."/>
            <person name="Zheng W."/>
            <person name="Hao B."/>
            <person name="Liu S.-M."/>
            <person name="Wang W."/>
            <person name="Yuan L."/>
            <person name="Cao M."/>
            <person name="McDermott J."/>
            <person name="Samudrala R."/>
            <person name="Wang J."/>
            <person name="Wong G.K.-S."/>
            <person name="Yang H."/>
        </authorList>
    </citation>
    <scope>NUCLEOTIDE SEQUENCE [LARGE SCALE GENOMIC DNA]</scope>
    <source>
        <strain>cv. Nipponbare</strain>
    </source>
</reference>
<reference key="5">
    <citation type="journal article" date="2003" name="Science">
        <title>Collection, mapping, and annotation of over 28,000 cDNA clones from japonica rice.</title>
        <authorList>
            <consortium name="The rice full-length cDNA consortium"/>
        </authorList>
    </citation>
    <scope>NUCLEOTIDE SEQUENCE [LARGE SCALE MRNA]</scope>
    <source>
        <strain>cv. Nipponbare</strain>
    </source>
</reference>
<reference key="6">
    <citation type="journal article" date="2006" name="J. Exp. Bot.">
        <title>Genome-wide analysis of plant glutaredoxin systems.</title>
        <authorList>
            <person name="Rouhier N."/>
            <person name="Couturier J."/>
            <person name="Jacquot J.-P."/>
        </authorList>
    </citation>
    <scope>GENE FAMILY</scope>
</reference>